<evidence type="ECO:0000255" key="1">
    <source>
        <dbReference type="HAMAP-Rule" id="MF_00013"/>
    </source>
</evidence>
<evidence type="ECO:0000255" key="2">
    <source>
        <dbReference type="PROSITE-ProRule" id="PRU01067"/>
    </source>
</evidence>
<accession>A1SZ16</accession>
<feature type="chain" id="PRO_0000321662" description="Octanoyltransferase">
    <location>
        <begin position="1"/>
        <end position="216"/>
    </location>
</feature>
<feature type="domain" description="BPL/LPL catalytic" evidence="2">
    <location>
        <begin position="34"/>
        <end position="209"/>
    </location>
</feature>
<feature type="active site" description="Acyl-thioester intermediate" evidence="1">
    <location>
        <position position="171"/>
    </location>
</feature>
<feature type="binding site" evidence="1">
    <location>
        <begin position="73"/>
        <end position="80"/>
    </location>
    <ligand>
        <name>substrate</name>
    </ligand>
</feature>
<feature type="binding site" evidence="1">
    <location>
        <begin position="140"/>
        <end position="142"/>
    </location>
    <ligand>
        <name>substrate</name>
    </ligand>
</feature>
<feature type="binding site" evidence="1">
    <location>
        <begin position="153"/>
        <end position="155"/>
    </location>
    <ligand>
        <name>substrate</name>
    </ligand>
</feature>
<feature type="site" description="Lowers pKa of active site Cys" evidence="1">
    <location>
        <position position="137"/>
    </location>
</feature>
<gene>
    <name evidence="1" type="primary">lipB</name>
    <name type="ordered locus">Ping_3029</name>
</gene>
<proteinExistence type="inferred from homology"/>
<name>LIPB_PSYIN</name>
<protein>
    <recommendedName>
        <fullName evidence="1">Octanoyltransferase</fullName>
        <ecNumber evidence="1">2.3.1.181</ecNumber>
    </recommendedName>
    <alternativeName>
        <fullName evidence="1">Lipoate-protein ligase B</fullName>
    </alternativeName>
    <alternativeName>
        <fullName evidence="1">Lipoyl/octanoyl transferase</fullName>
    </alternativeName>
    <alternativeName>
        <fullName evidence="1">Octanoyl-[acyl-carrier-protein]-protein N-octanoyltransferase</fullName>
    </alternativeName>
</protein>
<comment type="function">
    <text evidence="1">Catalyzes the transfer of endogenously produced octanoic acid from octanoyl-acyl-carrier-protein onto the lipoyl domains of lipoate-dependent enzymes. Lipoyl-ACP can also act as a substrate although octanoyl-ACP is likely to be the physiological substrate.</text>
</comment>
<comment type="catalytic activity">
    <reaction evidence="1">
        <text>octanoyl-[ACP] + L-lysyl-[protein] = N(6)-octanoyl-L-lysyl-[protein] + holo-[ACP] + H(+)</text>
        <dbReference type="Rhea" id="RHEA:17665"/>
        <dbReference type="Rhea" id="RHEA-COMP:9636"/>
        <dbReference type="Rhea" id="RHEA-COMP:9685"/>
        <dbReference type="Rhea" id="RHEA-COMP:9752"/>
        <dbReference type="Rhea" id="RHEA-COMP:9928"/>
        <dbReference type="ChEBI" id="CHEBI:15378"/>
        <dbReference type="ChEBI" id="CHEBI:29969"/>
        <dbReference type="ChEBI" id="CHEBI:64479"/>
        <dbReference type="ChEBI" id="CHEBI:78463"/>
        <dbReference type="ChEBI" id="CHEBI:78809"/>
        <dbReference type="EC" id="2.3.1.181"/>
    </reaction>
</comment>
<comment type="pathway">
    <text evidence="1">Protein modification; protein lipoylation via endogenous pathway; protein N(6)-(lipoyl)lysine from octanoyl-[acyl-carrier-protein]: step 1/2.</text>
</comment>
<comment type="subcellular location">
    <subcellularLocation>
        <location evidence="1">Cytoplasm</location>
    </subcellularLocation>
</comment>
<comment type="miscellaneous">
    <text evidence="1">In the reaction, the free carboxyl group of octanoic acid is attached via an amide linkage to the epsilon-amino group of a specific lysine residue of lipoyl domains of lipoate-dependent enzymes.</text>
</comment>
<comment type="similarity">
    <text evidence="1">Belongs to the LipB family.</text>
</comment>
<dbReference type="EC" id="2.3.1.181" evidence="1"/>
<dbReference type="EMBL" id="CP000510">
    <property type="protein sequence ID" value="ABM04731.1"/>
    <property type="molecule type" value="Genomic_DNA"/>
</dbReference>
<dbReference type="RefSeq" id="WP_011771285.1">
    <property type="nucleotide sequence ID" value="NC_008709.1"/>
</dbReference>
<dbReference type="SMR" id="A1SZ16"/>
<dbReference type="STRING" id="357804.Ping_3029"/>
<dbReference type="KEGG" id="pin:Ping_3029"/>
<dbReference type="eggNOG" id="COG0321">
    <property type="taxonomic scope" value="Bacteria"/>
</dbReference>
<dbReference type="HOGENOM" id="CLU_035168_3_1_6"/>
<dbReference type="OrthoDB" id="9787061at2"/>
<dbReference type="UniPathway" id="UPA00538">
    <property type="reaction ID" value="UER00592"/>
</dbReference>
<dbReference type="Proteomes" id="UP000000639">
    <property type="component" value="Chromosome"/>
</dbReference>
<dbReference type="GO" id="GO:0005737">
    <property type="term" value="C:cytoplasm"/>
    <property type="evidence" value="ECO:0007669"/>
    <property type="project" value="UniProtKB-SubCell"/>
</dbReference>
<dbReference type="GO" id="GO:0033819">
    <property type="term" value="F:lipoyl(octanoyl) transferase activity"/>
    <property type="evidence" value="ECO:0007669"/>
    <property type="project" value="UniProtKB-EC"/>
</dbReference>
<dbReference type="GO" id="GO:0036211">
    <property type="term" value="P:protein modification process"/>
    <property type="evidence" value="ECO:0007669"/>
    <property type="project" value="InterPro"/>
</dbReference>
<dbReference type="CDD" id="cd16444">
    <property type="entry name" value="LipB"/>
    <property type="match status" value="1"/>
</dbReference>
<dbReference type="FunFam" id="3.30.930.10:FF:000020">
    <property type="entry name" value="Octanoyltransferase"/>
    <property type="match status" value="1"/>
</dbReference>
<dbReference type="Gene3D" id="3.30.930.10">
    <property type="entry name" value="Bira Bifunctional Protein, Domain 2"/>
    <property type="match status" value="1"/>
</dbReference>
<dbReference type="HAMAP" id="MF_00013">
    <property type="entry name" value="LipB"/>
    <property type="match status" value="1"/>
</dbReference>
<dbReference type="InterPro" id="IPR045864">
    <property type="entry name" value="aa-tRNA-synth_II/BPL/LPL"/>
</dbReference>
<dbReference type="InterPro" id="IPR004143">
    <property type="entry name" value="BPL_LPL_catalytic"/>
</dbReference>
<dbReference type="InterPro" id="IPR000544">
    <property type="entry name" value="Octanoyltransferase"/>
</dbReference>
<dbReference type="InterPro" id="IPR020605">
    <property type="entry name" value="Octanoyltransferase_CS"/>
</dbReference>
<dbReference type="NCBIfam" id="TIGR00214">
    <property type="entry name" value="lipB"/>
    <property type="match status" value="1"/>
</dbReference>
<dbReference type="NCBIfam" id="NF010922">
    <property type="entry name" value="PRK14342.1"/>
    <property type="match status" value="1"/>
</dbReference>
<dbReference type="PANTHER" id="PTHR10993:SF7">
    <property type="entry name" value="LIPOYLTRANSFERASE 2, MITOCHONDRIAL-RELATED"/>
    <property type="match status" value="1"/>
</dbReference>
<dbReference type="PANTHER" id="PTHR10993">
    <property type="entry name" value="OCTANOYLTRANSFERASE"/>
    <property type="match status" value="1"/>
</dbReference>
<dbReference type="Pfam" id="PF21948">
    <property type="entry name" value="LplA-B_cat"/>
    <property type="match status" value="1"/>
</dbReference>
<dbReference type="PIRSF" id="PIRSF016262">
    <property type="entry name" value="LPLase"/>
    <property type="match status" value="1"/>
</dbReference>
<dbReference type="SUPFAM" id="SSF55681">
    <property type="entry name" value="Class II aaRS and biotin synthetases"/>
    <property type="match status" value="1"/>
</dbReference>
<dbReference type="PROSITE" id="PS51733">
    <property type="entry name" value="BPL_LPL_CATALYTIC"/>
    <property type="match status" value="1"/>
</dbReference>
<dbReference type="PROSITE" id="PS01313">
    <property type="entry name" value="LIPB"/>
    <property type="match status" value="1"/>
</dbReference>
<keyword id="KW-0012">Acyltransferase</keyword>
<keyword id="KW-0963">Cytoplasm</keyword>
<keyword id="KW-1185">Reference proteome</keyword>
<keyword id="KW-0808">Transferase</keyword>
<sequence length="216" mass="24170">MKTLDTQLKLRYLGRQDYLTSWQAMSDFTNQRDENTIDEIWLVEHPAVFTQGLAGKAEHLLKHSEIPIVQSDRGGQITFHAPGQLVVYLLINLRRKALNVRALVTVMEDSIINLLADYNVIAVAKPDAPGVYVNGKKIASLGLKIRKGCSFHGLALNVDMDLSPFLQINPCGYAGLEMTQCKAEGLTLSVDELAPLLIEKMNQQLDYSHIESFHHE</sequence>
<reference key="1">
    <citation type="journal article" date="2008" name="BMC Genomics">
        <title>Genomics of an extreme psychrophile, Psychromonas ingrahamii.</title>
        <authorList>
            <person name="Riley M."/>
            <person name="Staley J.T."/>
            <person name="Danchin A."/>
            <person name="Wang T.Z."/>
            <person name="Brettin T.S."/>
            <person name="Hauser L.J."/>
            <person name="Land M.L."/>
            <person name="Thompson L.S."/>
        </authorList>
    </citation>
    <scope>NUCLEOTIDE SEQUENCE [LARGE SCALE GENOMIC DNA]</scope>
    <source>
        <strain>DSM 17664 / CCUG 51855 / 37</strain>
    </source>
</reference>
<organism>
    <name type="scientific">Psychromonas ingrahamii (strain DSM 17664 / CCUG 51855 / 37)</name>
    <dbReference type="NCBI Taxonomy" id="357804"/>
    <lineage>
        <taxon>Bacteria</taxon>
        <taxon>Pseudomonadati</taxon>
        <taxon>Pseudomonadota</taxon>
        <taxon>Gammaproteobacteria</taxon>
        <taxon>Alteromonadales</taxon>
        <taxon>Psychromonadaceae</taxon>
        <taxon>Psychromonas</taxon>
    </lineage>
</organism>